<reference key="1">
    <citation type="submission" date="2004-11" db="EMBL/GenBank/DDBJ databases">
        <authorList>
            <consortium name="The German cDNA consortium"/>
        </authorList>
    </citation>
    <scope>NUCLEOTIDE SEQUENCE [LARGE SCALE MRNA]</scope>
    <source>
        <tissue>Heart</tissue>
        <tissue>Kidney</tissue>
    </source>
</reference>
<keyword id="KW-0012">Acyltransferase</keyword>
<keyword id="KW-0256">Endoplasmic reticulum</keyword>
<keyword id="KW-0443">Lipid metabolism</keyword>
<keyword id="KW-0472">Membrane</keyword>
<keyword id="KW-0597">Phosphoprotein</keyword>
<keyword id="KW-0663">Pyridoxal phosphate</keyword>
<keyword id="KW-1185">Reference proteome</keyword>
<keyword id="KW-0746">Sphingolipid metabolism</keyword>
<keyword id="KW-0808">Transferase</keyword>
<keyword id="KW-0812">Transmembrane</keyword>
<keyword id="KW-1133">Transmembrane helix</keyword>
<dbReference type="EC" id="2.3.1.50" evidence="2"/>
<dbReference type="EMBL" id="CR859297">
    <property type="protein sequence ID" value="CAH91475.1"/>
    <property type="molecule type" value="mRNA"/>
</dbReference>
<dbReference type="EMBL" id="CR860225">
    <property type="protein sequence ID" value="CAH92367.1"/>
    <property type="molecule type" value="mRNA"/>
</dbReference>
<dbReference type="RefSeq" id="NP_001126393.1">
    <property type="nucleotide sequence ID" value="NM_001132921.1"/>
</dbReference>
<dbReference type="SMR" id="Q5R9T5"/>
<dbReference type="FunCoup" id="Q5R9T5">
    <property type="interactions" value="3194"/>
</dbReference>
<dbReference type="STRING" id="9601.ENSPPYP00000021706"/>
<dbReference type="Ensembl" id="ENSPPYT00000022593.2">
    <property type="protein sequence ID" value="ENSPPYP00000021706.2"/>
    <property type="gene ID" value="ENSPPYG00000019371.3"/>
</dbReference>
<dbReference type="GeneID" id="100173375"/>
<dbReference type="KEGG" id="pon:100173375"/>
<dbReference type="CTD" id="10558"/>
<dbReference type="eggNOG" id="KOG1358">
    <property type="taxonomic scope" value="Eukaryota"/>
</dbReference>
<dbReference type="GeneTree" id="ENSGT00550000074872"/>
<dbReference type="InParanoid" id="Q5R9T5"/>
<dbReference type="OMA" id="LTKYGCG"/>
<dbReference type="OrthoDB" id="3168162at2759"/>
<dbReference type="UniPathway" id="UPA00222"/>
<dbReference type="Proteomes" id="UP000001595">
    <property type="component" value="Chromosome 9"/>
</dbReference>
<dbReference type="GO" id="GO:0005789">
    <property type="term" value="C:endoplasmic reticulum membrane"/>
    <property type="evidence" value="ECO:0007669"/>
    <property type="project" value="UniProtKB-SubCell"/>
</dbReference>
<dbReference type="GO" id="GO:0017059">
    <property type="term" value="C:serine palmitoyltransferase complex"/>
    <property type="evidence" value="ECO:0000250"/>
    <property type="project" value="UniProtKB"/>
</dbReference>
<dbReference type="GO" id="GO:0030170">
    <property type="term" value="F:pyridoxal phosphate binding"/>
    <property type="evidence" value="ECO:0007669"/>
    <property type="project" value="InterPro"/>
</dbReference>
<dbReference type="GO" id="GO:0004758">
    <property type="term" value="F:serine C-palmitoyltransferase activity"/>
    <property type="evidence" value="ECO:0000250"/>
    <property type="project" value="UniProtKB"/>
</dbReference>
<dbReference type="GO" id="GO:0046513">
    <property type="term" value="P:ceramide biosynthetic process"/>
    <property type="evidence" value="ECO:0007669"/>
    <property type="project" value="Ensembl"/>
</dbReference>
<dbReference type="GO" id="GO:1904504">
    <property type="term" value="P:positive regulation of lipophagy"/>
    <property type="evidence" value="ECO:0007669"/>
    <property type="project" value="Ensembl"/>
</dbReference>
<dbReference type="GO" id="GO:1904649">
    <property type="term" value="P:regulation of fat cell apoptotic process"/>
    <property type="evidence" value="ECO:0000250"/>
    <property type="project" value="UniProtKB"/>
</dbReference>
<dbReference type="GO" id="GO:0006665">
    <property type="term" value="P:sphingolipid metabolic process"/>
    <property type="evidence" value="ECO:0000250"/>
    <property type="project" value="UniProtKB"/>
</dbReference>
<dbReference type="GO" id="GO:0046512">
    <property type="term" value="P:sphingosine biosynthetic process"/>
    <property type="evidence" value="ECO:0007669"/>
    <property type="project" value="Ensembl"/>
</dbReference>
<dbReference type="FunFam" id="3.40.640.10:FF:000049">
    <property type="entry name" value="serine palmitoyltransferase 1 isoform X1"/>
    <property type="match status" value="1"/>
</dbReference>
<dbReference type="Gene3D" id="3.90.1150.10">
    <property type="entry name" value="Aspartate Aminotransferase, domain 1"/>
    <property type="match status" value="1"/>
</dbReference>
<dbReference type="Gene3D" id="3.40.640.10">
    <property type="entry name" value="Type I PLP-dependent aspartate aminotransferase-like (Major domain)"/>
    <property type="match status" value="1"/>
</dbReference>
<dbReference type="InterPro" id="IPR004839">
    <property type="entry name" value="Aminotransferase_I/II_large"/>
</dbReference>
<dbReference type="InterPro" id="IPR050087">
    <property type="entry name" value="AON_synthase_class-II"/>
</dbReference>
<dbReference type="InterPro" id="IPR015424">
    <property type="entry name" value="PyrdxlP-dep_Trfase"/>
</dbReference>
<dbReference type="InterPro" id="IPR015421">
    <property type="entry name" value="PyrdxlP-dep_Trfase_major"/>
</dbReference>
<dbReference type="InterPro" id="IPR015422">
    <property type="entry name" value="PyrdxlP-dep_Trfase_small"/>
</dbReference>
<dbReference type="PANTHER" id="PTHR13693">
    <property type="entry name" value="CLASS II AMINOTRANSFERASE/8-AMINO-7-OXONONANOATE SYNTHASE"/>
    <property type="match status" value="1"/>
</dbReference>
<dbReference type="PANTHER" id="PTHR13693:SF2">
    <property type="entry name" value="SERINE PALMITOYLTRANSFERASE 1"/>
    <property type="match status" value="1"/>
</dbReference>
<dbReference type="Pfam" id="PF00155">
    <property type="entry name" value="Aminotran_1_2"/>
    <property type="match status" value="1"/>
</dbReference>
<dbReference type="SUPFAM" id="SSF53383">
    <property type="entry name" value="PLP-dependent transferases"/>
    <property type="match status" value="1"/>
</dbReference>
<evidence type="ECO:0000250" key="1"/>
<evidence type="ECO:0000250" key="2">
    <source>
        <dbReference type="UniProtKB" id="O15269"/>
    </source>
</evidence>
<evidence type="ECO:0000250" key="3">
    <source>
        <dbReference type="UniProtKB" id="O35704"/>
    </source>
</evidence>
<evidence type="ECO:0000250" key="4">
    <source>
        <dbReference type="UniProtKB" id="Q3MHG1"/>
    </source>
</evidence>
<evidence type="ECO:0000255" key="5"/>
<evidence type="ECO:0000305" key="6"/>
<proteinExistence type="evidence at transcript level"/>
<name>SPTC1_PONAB</name>
<organism>
    <name type="scientific">Pongo abelii</name>
    <name type="common">Sumatran orangutan</name>
    <name type="synonym">Pongo pygmaeus abelii</name>
    <dbReference type="NCBI Taxonomy" id="9601"/>
    <lineage>
        <taxon>Eukaryota</taxon>
        <taxon>Metazoa</taxon>
        <taxon>Chordata</taxon>
        <taxon>Craniata</taxon>
        <taxon>Vertebrata</taxon>
        <taxon>Euteleostomi</taxon>
        <taxon>Mammalia</taxon>
        <taxon>Eutheria</taxon>
        <taxon>Euarchontoglires</taxon>
        <taxon>Primates</taxon>
        <taxon>Haplorrhini</taxon>
        <taxon>Catarrhini</taxon>
        <taxon>Hominidae</taxon>
        <taxon>Pongo</taxon>
    </lineage>
</organism>
<protein>
    <recommendedName>
        <fullName>Serine palmitoyltransferase 1</fullName>
        <ecNumber evidence="2">2.3.1.50</ecNumber>
    </recommendedName>
    <alternativeName>
        <fullName>Long chain base biosynthesis protein 1</fullName>
        <shortName>LCB 1</shortName>
    </alternativeName>
    <alternativeName>
        <fullName>Serine-palmitoyl-CoA transferase 1</fullName>
        <shortName>SPT 1</shortName>
        <shortName>SPT1</shortName>
    </alternativeName>
</protein>
<gene>
    <name type="primary">SPTLC1</name>
</gene>
<feature type="chain" id="PRO_0000327869" description="Serine palmitoyltransferase 1">
    <location>
        <begin position="1"/>
        <end position="473"/>
    </location>
</feature>
<feature type="transmembrane region" description="Helical" evidence="5">
    <location>
        <begin position="16"/>
        <end position="36"/>
    </location>
</feature>
<feature type="region of interest" description="Interaction with SPTLC2" evidence="2">
    <location>
        <begin position="1"/>
        <end position="66"/>
    </location>
</feature>
<feature type="modified residue" description="Phosphotyrosine; by ABL" evidence="2">
    <location>
        <position position="164"/>
    </location>
</feature>
<feature type="sequence conflict" description="In Ref. 1; CAH92367." evidence="6" ref="1">
    <original>T</original>
    <variation>I</variation>
    <location>
        <position position="158"/>
    </location>
</feature>
<accession>Q5R9T5</accession>
<accession>Q5R793</accession>
<sequence>MATATEQWVLVEMVQALYEAPAYHLILEGILILWIIRLLFSKTYKLQERSDLTVKEKEELIEEWQPEPLVPLVPKDHPALNYNIVSGPPSHKIVVNGKECINFASFNFLGLLDNPRVKAAALASLKKYGVGTCGPRGFYGTFDVHLDLEDRLAKFMKTEEAIIYSYGFATIASAIPAYSKRGDIVFVDRAACFAIQKGLQASRSDIKLFKHNDMADLERLLKEQEIEDQKNPRKARVTRRFIVVEGLYMNTGTICPLPELVKLKYKYKARIFLEESLSFGVLGEHGRGVTEHYGINIDDIDLISANMENALASIGGFCCGRSFVIDHQRLSGQGYCFSASLPPLLAAAAIEALNIMEENPGIFAVLKEKCRQIHKALQGISGLKVVGEPLSPAFHLQLEESTGSREQDVRLLQEIVDQCMNRSIALTQARYLEKEEKCLPPPSIRVVVTVEQTEEELDRAASTIKEVAQAVLL</sequence>
<comment type="function">
    <text evidence="2 3">Component of the serine palmitoyltransferase multisubunit enzyme (SPT) that catalyzes the initial and rate-limiting step in sphingolipid biosynthesis by condensing L-serine and activated acyl-CoA (most commonly palmitoyl-CoA) to form long-chain bases. The SPT complex is also composed of SPTLC2 or SPTLC3 and SPTSSA or SPTSSB. Within this complex, the heterodimer with SPTLC2 or SPTLC3 forms the catalytic core. The composition of the serine palmitoyltransferase (SPT) complex determines the substrate preference. The SPTLC1-SPTLC2-SPTSSA complex shows a strong preference for C16-CoA substrate, while the SPTLC1-SPTLC3-SPTSSA isozyme uses both C14-CoA and C16-CoA as substrates, with a slight preference for C14-CoA. The SPTLC1-SPTLC2-SPTSSB complex shows a strong preference for C18-CoA substrate, while the SPTLC1-SPTLC3-SPTSSB isozyme displays an ability to use a broader range of acyl-CoAs, without apparent preference (By similarity). Required for adipocyte cell viability and metabolic homeostasis (By similarity).</text>
</comment>
<comment type="catalytic activity">
    <reaction evidence="2">
        <text>L-serine + hexadecanoyl-CoA + H(+) = 3-oxosphinganine + CO2 + CoA</text>
        <dbReference type="Rhea" id="RHEA:14761"/>
        <dbReference type="ChEBI" id="CHEBI:15378"/>
        <dbReference type="ChEBI" id="CHEBI:16526"/>
        <dbReference type="ChEBI" id="CHEBI:33384"/>
        <dbReference type="ChEBI" id="CHEBI:57287"/>
        <dbReference type="ChEBI" id="CHEBI:57379"/>
        <dbReference type="ChEBI" id="CHEBI:58299"/>
        <dbReference type="EC" id="2.3.1.50"/>
    </reaction>
    <physiologicalReaction direction="left-to-right" evidence="2">
        <dbReference type="Rhea" id="RHEA:14762"/>
    </physiologicalReaction>
</comment>
<comment type="catalytic activity">
    <reaction evidence="2">
        <text>octadecanoyl-CoA + L-serine + H(+) = 3-oxoeicosasphinganine + CO2 + CoA</text>
        <dbReference type="Rhea" id="RHEA:33683"/>
        <dbReference type="ChEBI" id="CHEBI:15378"/>
        <dbReference type="ChEBI" id="CHEBI:16526"/>
        <dbReference type="ChEBI" id="CHEBI:33384"/>
        <dbReference type="ChEBI" id="CHEBI:57287"/>
        <dbReference type="ChEBI" id="CHEBI:57394"/>
        <dbReference type="ChEBI" id="CHEBI:65073"/>
    </reaction>
    <physiologicalReaction direction="left-to-right" evidence="2">
        <dbReference type="Rhea" id="RHEA:33684"/>
    </physiologicalReaction>
</comment>
<comment type="catalytic activity">
    <reaction evidence="2">
        <text>tetradecanoyl-CoA + L-serine + H(+) = 3-oxohexadecasphinganine + CO2 + CoA</text>
        <dbReference type="Rhea" id="RHEA:35675"/>
        <dbReference type="ChEBI" id="CHEBI:15378"/>
        <dbReference type="ChEBI" id="CHEBI:16526"/>
        <dbReference type="ChEBI" id="CHEBI:33384"/>
        <dbReference type="ChEBI" id="CHEBI:57287"/>
        <dbReference type="ChEBI" id="CHEBI:57385"/>
        <dbReference type="ChEBI" id="CHEBI:71007"/>
    </reaction>
    <physiologicalReaction direction="left-to-right" evidence="2">
        <dbReference type="Rhea" id="RHEA:35676"/>
    </physiologicalReaction>
</comment>
<comment type="catalytic activity">
    <reaction evidence="2">
        <text>dodecanoyl-CoA + L-serine + H(+) = 3-oxotetradecasphinganine + CO2 + CoA</text>
        <dbReference type="Rhea" id="RHEA:35679"/>
        <dbReference type="ChEBI" id="CHEBI:15378"/>
        <dbReference type="ChEBI" id="CHEBI:16526"/>
        <dbReference type="ChEBI" id="CHEBI:33384"/>
        <dbReference type="ChEBI" id="CHEBI:57287"/>
        <dbReference type="ChEBI" id="CHEBI:57375"/>
        <dbReference type="ChEBI" id="CHEBI:71008"/>
    </reaction>
    <physiologicalReaction direction="left-to-right" evidence="2">
        <dbReference type="Rhea" id="RHEA:35680"/>
    </physiologicalReaction>
</comment>
<comment type="cofactor">
    <cofactor evidence="1">
        <name>pyridoxal 5'-phosphate</name>
        <dbReference type="ChEBI" id="CHEBI:597326"/>
    </cofactor>
</comment>
<comment type="activity regulation">
    <text evidence="2 4">SPT complex catalytic activity is negatively regulated by ORMDL proteins, including ORMDL3, in the presence of ceramides (By similarity). This mechanism allows to maintain ceramide levels at sufficient concentrations for the production of complex sphingolipids, but which prevents the accumulation of ceramides to levels that trigger apoptosis (By similarity).</text>
</comment>
<comment type="pathway">
    <text>Lipid metabolism; sphingolipid metabolism.</text>
</comment>
<comment type="subunit">
    <text evidence="2 3">Component of the serine palmitoyltransferase (SPT) complex, which is also composed of SPTLC2 or SPTLC3 and SPTSSA or SPTSSB. The heterodimer with SPTLC2 or SPTLC3 forms the catalytic core of the enzyme, while SPTSSA or SPTSSB subunits determine substrate specificity. SPT also interacts with ORMDL proteins, especially ORMDL3, which negatively regulate SPT activity in the presence of ceramides. Forms dimers of heterodimers with SPTLC2 (By similarity). Interacts with RTN4 (By similarity).</text>
</comment>
<comment type="subcellular location">
    <subcellularLocation>
        <location evidence="3">Endoplasmic reticulum membrane</location>
        <topology evidence="3">Single-pass membrane protein</topology>
    </subcellularLocation>
</comment>
<comment type="domain">
    <text evidence="2">The transmembrane domain is involved in the interaction with ORMDL3.</text>
</comment>
<comment type="PTM">
    <text evidence="2">Phosphorylation at Tyr-164 inhibits activity and promotes cell survival.</text>
</comment>
<comment type="similarity">
    <text evidence="6">Belongs to the class-II pyridoxal-phosphate-dependent aminotransferase family.</text>
</comment>